<gene>
    <name type="primary">nanE</name>
    <name type="ordered locus">STY1166</name>
    <name type="ordered locus">t1791</name>
</gene>
<organism>
    <name type="scientific">Salmonella typhi</name>
    <dbReference type="NCBI Taxonomy" id="90370"/>
    <lineage>
        <taxon>Bacteria</taxon>
        <taxon>Pseudomonadati</taxon>
        <taxon>Pseudomonadota</taxon>
        <taxon>Gammaproteobacteria</taxon>
        <taxon>Enterobacterales</taxon>
        <taxon>Enterobacteriaceae</taxon>
        <taxon>Salmonella</taxon>
    </lineage>
</organism>
<protein>
    <recommendedName>
        <fullName>Putative N-acetylmannosamine-6-phosphate 2-epimerase</fullName>
        <ecNumber>5.1.3.9</ecNumber>
    </recommendedName>
    <alternativeName>
        <fullName>ManNAc-6-P epimerase</fullName>
    </alternativeName>
</protein>
<name>NANE_SALTI</name>
<accession>P60668</accession>
<accession>Q8XG90</accession>
<sequence>MSLLARLEQSVHENGGLIVSCQPVPGSPMDKPEIVAAMAQAAASAGAVAVRIEGIENLRTVRPHLSVPIIGIIKRDLTGSPVRITPYLQDVDALAQAGADIIAFDASFRSRPVDIDSLLTRIRLHGLLAMADCSTVNEGISCHQKGIEFIGTTLSGYTGPITPVEPDLAMVTQLSHAGCRVIAEGRYNTPALAANAIEHGAWAVTVGSAITRIEHICQWFSHAVKR</sequence>
<feature type="chain" id="PRO_0000179793" description="Putative N-acetylmannosamine-6-phosphate 2-epimerase">
    <location>
        <begin position="1"/>
        <end position="226"/>
    </location>
</feature>
<feature type="helix" evidence="2">
    <location>
        <begin position="1"/>
        <end position="14"/>
    </location>
</feature>
<feature type="strand" evidence="2">
    <location>
        <begin position="17"/>
        <end position="20"/>
    </location>
</feature>
<feature type="helix" evidence="2">
    <location>
        <begin position="32"/>
        <end position="44"/>
    </location>
</feature>
<feature type="strand" evidence="2">
    <location>
        <begin position="48"/>
        <end position="54"/>
    </location>
</feature>
<feature type="helix" evidence="2">
    <location>
        <begin position="55"/>
        <end position="61"/>
    </location>
</feature>
<feature type="helix" evidence="2">
    <location>
        <begin position="62"/>
        <end position="64"/>
    </location>
</feature>
<feature type="strand" evidence="2">
    <location>
        <begin position="69"/>
        <end position="72"/>
    </location>
</feature>
<feature type="helix" evidence="2">
    <location>
        <begin position="88"/>
        <end position="97"/>
    </location>
</feature>
<feature type="strand" evidence="2">
    <location>
        <begin position="100"/>
        <end position="105"/>
    </location>
</feature>
<feature type="helix" evidence="2">
    <location>
        <begin position="115"/>
        <end position="124"/>
    </location>
</feature>
<feature type="strand" evidence="2">
    <location>
        <begin position="128"/>
        <end position="132"/>
    </location>
</feature>
<feature type="helix" evidence="2">
    <location>
        <begin position="136"/>
        <end position="144"/>
    </location>
</feature>
<feature type="strand" evidence="2">
    <location>
        <begin position="148"/>
        <end position="151"/>
    </location>
</feature>
<feature type="turn" evidence="2">
    <location>
        <begin position="153"/>
        <end position="156"/>
    </location>
</feature>
<feature type="strand" evidence="2">
    <location>
        <begin position="157"/>
        <end position="160"/>
    </location>
</feature>
<feature type="helix" evidence="2">
    <location>
        <begin position="168"/>
        <end position="175"/>
    </location>
</feature>
<feature type="turn" evidence="2">
    <location>
        <begin position="176"/>
        <end position="178"/>
    </location>
</feature>
<feature type="strand" evidence="2">
    <location>
        <begin position="181"/>
        <end position="186"/>
    </location>
</feature>
<feature type="helix" evidence="2">
    <location>
        <begin position="190"/>
        <end position="198"/>
    </location>
</feature>
<feature type="strand" evidence="2">
    <location>
        <begin position="202"/>
        <end position="206"/>
    </location>
</feature>
<feature type="helix" evidence="2">
    <location>
        <begin position="208"/>
        <end position="211"/>
    </location>
</feature>
<feature type="helix" evidence="2">
    <location>
        <begin position="213"/>
        <end position="224"/>
    </location>
</feature>
<proteinExistence type="evidence at protein level"/>
<keyword id="KW-0002">3D-structure</keyword>
<keyword id="KW-0119">Carbohydrate metabolism</keyword>
<keyword id="KW-0413">Isomerase</keyword>
<comment type="function">
    <text evidence="1">Converts N-acetylmannosamine-6-phosphate (ManNAc-6-P) to N-acetylglucosamine-6-phosphate (GlcNAc-6-P).</text>
</comment>
<comment type="catalytic activity">
    <reaction>
        <text>an N-acyl-D-glucosamine 6-phosphate = an N-acyl-D-mannosamine 6-phosphate</text>
        <dbReference type="Rhea" id="RHEA:23932"/>
        <dbReference type="ChEBI" id="CHEBI:57599"/>
        <dbReference type="ChEBI" id="CHEBI:57666"/>
        <dbReference type="EC" id="5.1.3.9"/>
    </reaction>
</comment>
<comment type="pathway">
    <text>Amino-sugar metabolism; N-acetylneuraminate degradation; D-fructose 6-phosphate from N-acetylneuraminate: step 3/5.</text>
</comment>
<comment type="similarity">
    <text evidence="1">Belongs to the NanE family.</text>
</comment>
<reference key="1">
    <citation type="journal article" date="2001" name="Nature">
        <title>Complete genome sequence of a multiple drug resistant Salmonella enterica serovar Typhi CT18.</title>
        <authorList>
            <person name="Parkhill J."/>
            <person name="Dougan G."/>
            <person name="James K.D."/>
            <person name="Thomson N.R."/>
            <person name="Pickard D."/>
            <person name="Wain J."/>
            <person name="Churcher C.M."/>
            <person name="Mungall K.L."/>
            <person name="Bentley S.D."/>
            <person name="Holden M.T.G."/>
            <person name="Sebaihia M."/>
            <person name="Baker S."/>
            <person name="Basham D."/>
            <person name="Brooks K."/>
            <person name="Chillingworth T."/>
            <person name="Connerton P."/>
            <person name="Cronin A."/>
            <person name="Davis P."/>
            <person name="Davies R.M."/>
            <person name="Dowd L."/>
            <person name="White N."/>
            <person name="Farrar J."/>
            <person name="Feltwell T."/>
            <person name="Hamlin N."/>
            <person name="Haque A."/>
            <person name="Hien T.T."/>
            <person name="Holroyd S."/>
            <person name="Jagels K."/>
            <person name="Krogh A."/>
            <person name="Larsen T.S."/>
            <person name="Leather S."/>
            <person name="Moule S."/>
            <person name="O'Gaora P."/>
            <person name="Parry C."/>
            <person name="Quail M.A."/>
            <person name="Rutherford K.M."/>
            <person name="Simmonds M."/>
            <person name="Skelton J."/>
            <person name="Stevens K."/>
            <person name="Whitehead S."/>
            <person name="Barrell B.G."/>
        </authorList>
    </citation>
    <scope>NUCLEOTIDE SEQUENCE [LARGE SCALE GENOMIC DNA]</scope>
    <source>
        <strain>CT18</strain>
    </source>
</reference>
<reference key="2">
    <citation type="journal article" date="2003" name="J. Bacteriol.">
        <title>Comparative genomics of Salmonella enterica serovar Typhi strains Ty2 and CT18.</title>
        <authorList>
            <person name="Deng W."/>
            <person name="Liou S.-R."/>
            <person name="Plunkett G. III"/>
            <person name="Mayhew G.F."/>
            <person name="Rose D.J."/>
            <person name="Burland V."/>
            <person name="Kodoyianni V."/>
            <person name="Schwartz D.C."/>
            <person name="Blattner F.R."/>
        </authorList>
    </citation>
    <scope>NUCLEOTIDE SEQUENCE [LARGE SCALE GENOMIC DNA]</scope>
    <source>
        <strain>ATCC 700931 / Ty2</strain>
    </source>
</reference>
<dbReference type="EC" id="5.1.3.9"/>
<dbReference type="EMBL" id="AL513382">
    <property type="protein sequence ID" value="CAD08254.1"/>
    <property type="molecule type" value="Genomic_DNA"/>
</dbReference>
<dbReference type="EMBL" id="AE014613">
    <property type="protein sequence ID" value="AAO69413.1"/>
    <property type="molecule type" value="Genomic_DNA"/>
</dbReference>
<dbReference type="RefSeq" id="NP_455624.1">
    <property type="nucleotide sequence ID" value="NC_003198.1"/>
</dbReference>
<dbReference type="RefSeq" id="WP_000054243.1">
    <property type="nucleotide sequence ID" value="NZ_WSUR01000018.1"/>
</dbReference>
<dbReference type="PDB" id="3Q58">
    <property type="method" value="X-ray"/>
    <property type="resolution" value="1.80 A"/>
    <property type="chains" value="A/B=1-226"/>
</dbReference>
<dbReference type="PDBsum" id="3Q58"/>
<dbReference type="SMR" id="P60668"/>
<dbReference type="STRING" id="220341.gene:17585133"/>
<dbReference type="KEGG" id="stt:t1791"/>
<dbReference type="KEGG" id="sty:STY1166"/>
<dbReference type="PATRIC" id="fig|220341.7.peg.1166"/>
<dbReference type="eggNOG" id="COG3010">
    <property type="taxonomic scope" value="Bacteria"/>
</dbReference>
<dbReference type="HOGENOM" id="CLU_086300_0_0_6"/>
<dbReference type="OMA" id="TRPMEIT"/>
<dbReference type="OrthoDB" id="9810372at2"/>
<dbReference type="UniPathway" id="UPA00629">
    <property type="reaction ID" value="UER00682"/>
</dbReference>
<dbReference type="EvolutionaryTrace" id="P60668"/>
<dbReference type="Proteomes" id="UP000000541">
    <property type="component" value="Chromosome"/>
</dbReference>
<dbReference type="Proteomes" id="UP000002670">
    <property type="component" value="Chromosome"/>
</dbReference>
<dbReference type="GO" id="GO:0005829">
    <property type="term" value="C:cytosol"/>
    <property type="evidence" value="ECO:0007669"/>
    <property type="project" value="TreeGrafter"/>
</dbReference>
<dbReference type="GO" id="GO:0047465">
    <property type="term" value="F:N-acylglucosamine-6-phosphate 2-epimerase activity"/>
    <property type="evidence" value="ECO:0007669"/>
    <property type="project" value="UniProtKB-EC"/>
</dbReference>
<dbReference type="GO" id="GO:0005975">
    <property type="term" value="P:carbohydrate metabolic process"/>
    <property type="evidence" value="ECO:0007669"/>
    <property type="project" value="UniProtKB-UniRule"/>
</dbReference>
<dbReference type="GO" id="GO:0006053">
    <property type="term" value="P:N-acetylmannosamine catabolic process"/>
    <property type="evidence" value="ECO:0007669"/>
    <property type="project" value="TreeGrafter"/>
</dbReference>
<dbReference type="GO" id="GO:0019262">
    <property type="term" value="P:N-acetylneuraminate catabolic process"/>
    <property type="evidence" value="ECO:0007669"/>
    <property type="project" value="UniProtKB-UniRule"/>
</dbReference>
<dbReference type="CDD" id="cd04729">
    <property type="entry name" value="NanE"/>
    <property type="match status" value="1"/>
</dbReference>
<dbReference type="FunFam" id="3.20.20.70:FF:000035">
    <property type="entry name" value="Putative N-acetylmannosamine-6-phosphate 2-epimerase"/>
    <property type="match status" value="1"/>
</dbReference>
<dbReference type="Gene3D" id="3.20.20.70">
    <property type="entry name" value="Aldolase class I"/>
    <property type="match status" value="1"/>
</dbReference>
<dbReference type="HAMAP" id="MF_01235">
    <property type="entry name" value="ManNAc6P_epimer"/>
    <property type="match status" value="1"/>
</dbReference>
<dbReference type="InterPro" id="IPR013785">
    <property type="entry name" value="Aldolase_TIM"/>
</dbReference>
<dbReference type="InterPro" id="IPR007260">
    <property type="entry name" value="NanE"/>
</dbReference>
<dbReference type="InterPro" id="IPR011060">
    <property type="entry name" value="RibuloseP-bd_barrel"/>
</dbReference>
<dbReference type="NCBIfam" id="NF002231">
    <property type="entry name" value="PRK01130.1"/>
    <property type="match status" value="1"/>
</dbReference>
<dbReference type="PANTHER" id="PTHR36204">
    <property type="entry name" value="N-ACETYLMANNOSAMINE-6-PHOSPHATE 2-EPIMERASE-RELATED"/>
    <property type="match status" value="1"/>
</dbReference>
<dbReference type="PANTHER" id="PTHR36204:SF1">
    <property type="entry name" value="N-ACETYLMANNOSAMINE-6-PHOSPHATE 2-EPIMERASE-RELATED"/>
    <property type="match status" value="1"/>
</dbReference>
<dbReference type="Pfam" id="PF04131">
    <property type="entry name" value="NanE"/>
    <property type="match status" value="1"/>
</dbReference>
<dbReference type="SUPFAM" id="SSF51366">
    <property type="entry name" value="Ribulose-phoshate binding barrel"/>
    <property type="match status" value="1"/>
</dbReference>
<evidence type="ECO:0000305" key="1"/>
<evidence type="ECO:0007829" key="2">
    <source>
        <dbReference type="PDB" id="3Q58"/>
    </source>
</evidence>